<protein>
    <recommendedName>
        <fullName evidence="1">Large ribosomal subunit protein uL14</fullName>
    </recommendedName>
    <alternativeName>
        <fullName evidence="2">50S ribosomal protein L14</fullName>
    </alternativeName>
</protein>
<gene>
    <name evidence="1" type="primary">rplN</name>
    <name type="ordered locus">RC1_0721</name>
</gene>
<sequence length="122" mass="13480">MIQMQTNLEVADNSGARRVQCIKVLGGAGRRFASVGDIIVVSVKEAIPRGRVKKGDVHRAVIVRTAKEIRREDGSCIRFDRNAAVLINKQGEPIGTRIFGPVTRELRAKKYMKIISLAPEVL</sequence>
<accession>B6IRR6</accession>
<organism>
    <name type="scientific">Rhodospirillum centenum (strain ATCC 51521 / SW)</name>
    <dbReference type="NCBI Taxonomy" id="414684"/>
    <lineage>
        <taxon>Bacteria</taxon>
        <taxon>Pseudomonadati</taxon>
        <taxon>Pseudomonadota</taxon>
        <taxon>Alphaproteobacteria</taxon>
        <taxon>Rhodospirillales</taxon>
        <taxon>Rhodospirillaceae</taxon>
        <taxon>Rhodospirillum</taxon>
    </lineage>
</organism>
<evidence type="ECO:0000255" key="1">
    <source>
        <dbReference type="HAMAP-Rule" id="MF_01367"/>
    </source>
</evidence>
<evidence type="ECO:0000305" key="2"/>
<feature type="chain" id="PRO_1000144319" description="Large ribosomal subunit protein uL14">
    <location>
        <begin position="1"/>
        <end position="122"/>
    </location>
</feature>
<dbReference type="EMBL" id="CP000613">
    <property type="protein sequence ID" value="ACI98152.1"/>
    <property type="molecule type" value="Genomic_DNA"/>
</dbReference>
<dbReference type="RefSeq" id="WP_012565943.1">
    <property type="nucleotide sequence ID" value="NC_011420.2"/>
</dbReference>
<dbReference type="SMR" id="B6IRR6"/>
<dbReference type="STRING" id="414684.RC1_0721"/>
<dbReference type="KEGG" id="rce:RC1_0721"/>
<dbReference type="eggNOG" id="COG0093">
    <property type="taxonomic scope" value="Bacteria"/>
</dbReference>
<dbReference type="HOGENOM" id="CLU_095071_2_1_5"/>
<dbReference type="OrthoDB" id="9806379at2"/>
<dbReference type="Proteomes" id="UP000001591">
    <property type="component" value="Chromosome"/>
</dbReference>
<dbReference type="GO" id="GO:0022625">
    <property type="term" value="C:cytosolic large ribosomal subunit"/>
    <property type="evidence" value="ECO:0007669"/>
    <property type="project" value="TreeGrafter"/>
</dbReference>
<dbReference type="GO" id="GO:0070180">
    <property type="term" value="F:large ribosomal subunit rRNA binding"/>
    <property type="evidence" value="ECO:0007669"/>
    <property type="project" value="TreeGrafter"/>
</dbReference>
<dbReference type="GO" id="GO:0003735">
    <property type="term" value="F:structural constituent of ribosome"/>
    <property type="evidence" value="ECO:0007669"/>
    <property type="project" value="InterPro"/>
</dbReference>
<dbReference type="GO" id="GO:0006412">
    <property type="term" value="P:translation"/>
    <property type="evidence" value="ECO:0007669"/>
    <property type="project" value="UniProtKB-UniRule"/>
</dbReference>
<dbReference type="CDD" id="cd00337">
    <property type="entry name" value="Ribosomal_uL14"/>
    <property type="match status" value="1"/>
</dbReference>
<dbReference type="FunFam" id="2.40.150.20:FF:000001">
    <property type="entry name" value="50S ribosomal protein L14"/>
    <property type="match status" value="1"/>
</dbReference>
<dbReference type="Gene3D" id="2.40.150.20">
    <property type="entry name" value="Ribosomal protein L14"/>
    <property type="match status" value="1"/>
</dbReference>
<dbReference type="HAMAP" id="MF_01367">
    <property type="entry name" value="Ribosomal_uL14"/>
    <property type="match status" value="1"/>
</dbReference>
<dbReference type="InterPro" id="IPR000218">
    <property type="entry name" value="Ribosomal_uL14"/>
</dbReference>
<dbReference type="InterPro" id="IPR005745">
    <property type="entry name" value="Ribosomal_uL14_bac-type"/>
</dbReference>
<dbReference type="InterPro" id="IPR019972">
    <property type="entry name" value="Ribosomal_uL14_CS"/>
</dbReference>
<dbReference type="InterPro" id="IPR036853">
    <property type="entry name" value="Ribosomal_uL14_sf"/>
</dbReference>
<dbReference type="NCBIfam" id="TIGR01067">
    <property type="entry name" value="rplN_bact"/>
    <property type="match status" value="1"/>
</dbReference>
<dbReference type="PANTHER" id="PTHR11761">
    <property type="entry name" value="50S/60S RIBOSOMAL PROTEIN L14/L23"/>
    <property type="match status" value="1"/>
</dbReference>
<dbReference type="PANTHER" id="PTHR11761:SF3">
    <property type="entry name" value="LARGE RIBOSOMAL SUBUNIT PROTEIN UL14M"/>
    <property type="match status" value="1"/>
</dbReference>
<dbReference type="Pfam" id="PF00238">
    <property type="entry name" value="Ribosomal_L14"/>
    <property type="match status" value="1"/>
</dbReference>
<dbReference type="SMART" id="SM01374">
    <property type="entry name" value="Ribosomal_L14"/>
    <property type="match status" value="1"/>
</dbReference>
<dbReference type="SUPFAM" id="SSF50193">
    <property type="entry name" value="Ribosomal protein L14"/>
    <property type="match status" value="1"/>
</dbReference>
<dbReference type="PROSITE" id="PS00049">
    <property type="entry name" value="RIBOSOMAL_L14"/>
    <property type="match status" value="1"/>
</dbReference>
<comment type="function">
    <text evidence="1">Binds to 23S rRNA. Forms part of two intersubunit bridges in the 70S ribosome.</text>
</comment>
<comment type="subunit">
    <text evidence="1">Part of the 50S ribosomal subunit. Forms a cluster with proteins L3 and L19. In the 70S ribosome, L14 and L19 interact and together make contacts with the 16S rRNA in bridges B5 and B8.</text>
</comment>
<comment type="similarity">
    <text evidence="1">Belongs to the universal ribosomal protein uL14 family.</text>
</comment>
<name>RL14_RHOCS</name>
<reference key="1">
    <citation type="submission" date="2007-03" db="EMBL/GenBank/DDBJ databases">
        <title>Genome sequence of Rhodospirillum centenum.</title>
        <authorList>
            <person name="Touchman J.W."/>
            <person name="Bauer C."/>
            <person name="Blankenship R.E."/>
        </authorList>
    </citation>
    <scope>NUCLEOTIDE SEQUENCE [LARGE SCALE GENOMIC DNA]</scope>
    <source>
        <strain>ATCC 51521 / SW</strain>
    </source>
</reference>
<proteinExistence type="inferred from homology"/>
<keyword id="KW-1185">Reference proteome</keyword>
<keyword id="KW-0687">Ribonucleoprotein</keyword>
<keyword id="KW-0689">Ribosomal protein</keyword>
<keyword id="KW-0694">RNA-binding</keyword>
<keyword id="KW-0699">rRNA-binding</keyword>